<proteinExistence type="evidence at protein level"/>
<dbReference type="EC" id="3.5.4.33" evidence="1"/>
<dbReference type="EMBL" id="X52144">
    <property type="protein sequence ID" value="CAA36389.1"/>
    <property type="molecule type" value="Genomic_DNA"/>
</dbReference>
<dbReference type="EMBL" id="D26185">
    <property type="protein sequence ID" value="BAA05254.1"/>
    <property type="molecule type" value="Genomic_DNA"/>
</dbReference>
<dbReference type="EMBL" id="AL009126">
    <property type="protein sequence ID" value="CAB11794.1"/>
    <property type="molecule type" value="Genomic_DNA"/>
</dbReference>
<dbReference type="PIR" id="S11690">
    <property type="entry name" value="S11690"/>
</dbReference>
<dbReference type="RefSeq" id="NP_387899.1">
    <property type="nucleotide sequence ID" value="NC_000964.3"/>
</dbReference>
<dbReference type="RefSeq" id="WP_003247140.1">
    <property type="nucleotide sequence ID" value="NZ_OZ025638.1"/>
</dbReference>
<dbReference type="PDB" id="7CPH">
    <property type="method" value="X-ray"/>
    <property type="resolution" value="2.30 A"/>
    <property type="chains" value="A/B=1-161"/>
</dbReference>
<dbReference type="PDBsum" id="7CPH"/>
<dbReference type="SMR" id="P21335"/>
<dbReference type="FunCoup" id="P21335">
    <property type="interactions" value="448"/>
</dbReference>
<dbReference type="STRING" id="224308.BSU00180"/>
<dbReference type="PaxDb" id="224308-BSU00180"/>
<dbReference type="EnsemblBacteria" id="CAB11794">
    <property type="protein sequence ID" value="CAB11794"/>
    <property type="gene ID" value="BSU_00180"/>
</dbReference>
<dbReference type="GeneID" id="937989"/>
<dbReference type="KEGG" id="bsu:BSU00180"/>
<dbReference type="PATRIC" id="fig|224308.179.peg.18"/>
<dbReference type="eggNOG" id="COG0590">
    <property type="taxonomic scope" value="Bacteria"/>
</dbReference>
<dbReference type="InParanoid" id="P21335"/>
<dbReference type="OrthoDB" id="9802676at2"/>
<dbReference type="PhylomeDB" id="P21335"/>
<dbReference type="BioCyc" id="BSUB:BSU00180-MONOMER"/>
<dbReference type="Proteomes" id="UP000001570">
    <property type="component" value="Chromosome"/>
</dbReference>
<dbReference type="GO" id="GO:0052717">
    <property type="term" value="F:tRNA-specific adenosine-34 deaminase activity"/>
    <property type="evidence" value="ECO:0000318"/>
    <property type="project" value="GO_Central"/>
</dbReference>
<dbReference type="GO" id="GO:0008270">
    <property type="term" value="F:zinc ion binding"/>
    <property type="evidence" value="ECO:0007669"/>
    <property type="project" value="UniProtKB-UniRule"/>
</dbReference>
<dbReference type="GO" id="GO:0002100">
    <property type="term" value="P:tRNA wobble adenosine to inosine editing"/>
    <property type="evidence" value="ECO:0000318"/>
    <property type="project" value="GO_Central"/>
</dbReference>
<dbReference type="CDD" id="cd01285">
    <property type="entry name" value="nucleoside_deaminase"/>
    <property type="match status" value="1"/>
</dbReference>
<dbReference type="FunFam" id="3.40.140.10:FF:000005">
    <property type="entry name" value="tRNA-specific adenosine deaminase"/>
    <property type="match status" value="1"/>
</dbReference>
<dbReference type="Gene3D" id="3.40.140.10">
    <property type="entry name" value="Cytidine Deaminase, domain 2"/>
    <property type="match status" value="1"/>
</dbReference>
<dbReference type="HAMAP" id="MF_00972">
    <property type="entry name" value="tRNA_aden_deaminase"/>
    <property type="match status" value="1"/>
</dbReference>
<dbReference type="InterPro" id="IPR016192">
    <property type="entry name" value="APOBEC/CMP_deaminase_Zn-bd"/>
</dbReference>
<dbReference type="InterPro" id="IPR002125">
    <property type="entry name" value="CMP_dCMP_dom"/>
</dbReference>
<dbReference type="InterPro" id="IPR016193">
    <property type="entry name" value="Cytidine_deaminase-like"/>
</dbReference>
<dbReference type="InterPro" id="IPR028883">
    <property type="entry name" value="tRNA_aden_deaminase"/>
</dbReference>
<dbReference type="NCBIfam" id="NF008113">
    <property type="entry name" value="PRK10860.1"/>
    <property type="match status" value="1"/>
</dbReference>
<dbReference type="PANTHER" id="PTHR11079">
    <property type="entry name" value="CYTOSINE DEAMINASE FAMILY MEMBER"/>
    <property type="match status" value="1"/>
</dbReference>
<dbReference type="PANTHER" id="PTHR11079:SF202">
    <property type="entry name" value="TRNA-SPECIFIC ADENOSINE DEAMINASE"/>
    <property type="match status" value="1"/>
</dbReference>
<dbReference type="Pfam" id="PF14437">
    <property type="entry name" value="MafB19-deam"/>
    <property type="match status" value="1"/>
</dbReference>
<dbReference type="SUPFAM" id="SSF53927">
    <property type="entry name" value="Cytidine deaminase-like"/>
    <property type="match status" value="1"/>
</dbReference>
<dbReference type="PROSITE" id="PS00903">
    <property type="entry name" value="CYT_DCMP_DEAMINASES_1"/>
    <property type="match status" value="1"/>
</dbReference>
<dbReference type="PROSITE" id="PS51747">
    <property type="entry name" value="CYT_DCMP_DEAMINASES_2"/>
    <property type="match status" value="1"/>
</dbReference>
<keyword id="KW-0002">3D-structure</keyword>
<keyword id="KW-0903">Direct protein sequencing</keyword>
<keyword id="KW-0378">Hydrolase</keyword>
<keyword id="KW-0479">Metal-binding</keyword>
<keyword id="KW-1185">Reference proteome</keyword>
<keyword id="KW-0819">tRNA processing</keyword>
<keyword id="KW-0862">Zinc</keyword>
<feature type="chain" id="PRO_0000171705" description="tRNA-specific adenosine deaminase">
    <location>
        <begin position="1"/>
        <end position="161"/>
    </location>
</feature>
<feature type="domain" description="CMP/dCMP-type deaminase" evidence="2">
    <location>
        <begin position="2"/>
        <end position="120"/>
    </location>
</feature>
<feature type="active site" description="Proton donor" evidence="1">
    <location>
        <position position="55"/>
    </location>
</feature>
<feature type="binding site" evidence="1">
    <location>
        <position position="53"/>
    </location>
    <ligand>
        <name>Zn(2+)</name>
        <dbReference type="ChEBI" id="CHEBI:29105"/>
        <note>catalytic</note>
    </ligand>
</feature>
<feature type="binding site" evidence="1">
    <location>
        <position position="83"/>
    </location>
    <ligand>
        <name>Zn(2+)</name>
        <dbReference type="ChEBI" id="CHEBI:29105"/>
        <note>catalytic</note>
    </ligand>
</feature>
<feature type="binding site" evidence="1">
    <location>
        <position position="86"/>
    </location>
    <ligand>
        <name>Zn(2+)</name>
        <dbReference type="ChEBI" id="CHEBI:29105"/>
        <note>catalytic</note>
    </ligand>
</feature>
<feature type="helix" evidence="3">
    <location>
        <begin position="3"/>
        <end position="20"/>
    </location>
</feature>
<feature type="strand" evidence="3">
    <location>
        <begin position="27"/>
        <end position="32"/>
    </location>
</feature>
<feature type="strand" evidence="3">
    <location>
        <begin position="35"/>
        <end position="41"/>
    </location>
</feature>
<feature type="turn" evidence="3">
    <location>
        <begin position="44"/>
        <end position="46"/>
    </location>
</feature>
<feature type="helix" evidence="3">
    <location>
        <begin position="54"/>
        <end position="66"/>
    </location>
</feature>
<feature type="strand" evidence="3">
    <location>
        <begin position="74"/>
        <end position="80"/>
    </location>
</feature>
<feature type="helix" evidence="3">
    <location>
        <begin position="84"/>
        <end position="92"/>
    </location>
</feature>
<feature type="strand" evidence="3">
    <location>
        <begin position="96"/>
        <end position="102"/>
    </location>
</feature>
<feature type="turn" evidence="3">
    <location>
        <begin position="105"/>
        <end position="107"/>
    </location>
</feature>
<feature type="helix" evidence="3">
    <location>
        <begin position="116"/>
        <end position="118"/>
    </location>
</feature>
<feature type="strand" evidence="3">
    <location>
        <begin position="127"/>
        <end position="129"/>
    </location>
</feature>
<feature type="helix" evidence="3">
    <location>
        <begin position="134"/>
        <end position="150"/>
    </location>
</feature>
<sequence>MTQDELYMKEAIKEAKKAEEKGEVPIGAVLVINGEIIARAHNLRETEQRSIAHAEMLVIDEACKALGTWRLEGATLYVTLEPCPMCAGAVVLSRVEKVVFGAFDPKGGCSGTLMNLLQEERFNHQAEVVSGVLEEECGGMLSAFFRELRKKKKAARKNLSE</sequence>
<accession>P21335</accession>
<organism>
    <name type="scientific">Bacillus subtilis (strain 168)</name>
    <dbReference type="NCBI Taxonomy" id="224308"/>
    <lineage>
        <taxon>Bacteria</taxon>
        <taxon>Bacillati</taxon>
        <taxon>Bacillota</taxon>
        <taxon>Bacilli</taxon>
        <taxon>Bacillales</taxon>
        <taxon>Bacillaceae</taxon>
        <taxon>Bacillus</taxon>
    </lineage>
</organism>
<comment type="function">
    <text evidence="1">Catalyzes the deamination of adenosine to inosine at the wobble position 34 of tRNA(Arg2).</text>
</comment>
<comment type="catalytic activity">
    <reaction evidence="1">
        <text>adenosine(34) in tRNA + H2O + H(+) = inosine(34) in tRNA + NH4(+)</text>
        <dbReference type="Rhea" id="RHEA:43168"/>
        <dbReference type="Rhea" id="RHEA-COMP:10373"/>
        <dbReference type="Rhea" id="RHEA-COMP:10374"/>
        <dbReference type="ChEBI" id="CHEBI:15377"/>
        <dbReference type="ChEBI" id="CHEBI:15378"/>
        <dbReference type="ChEBI" id="CHEBI:28938"/>
        <dbReference type="ChEBI" id="CHEBI:74411"/>
        <dbReference type="ChEBI" id="CHEBI:82852"/>
        <dbReference type="EC" id="3.5.4.33"/>
    </reaction>
</comment>
<comment type="cofactor">
    <cofactor evidence="1">
        <name>Zn(2+)</name>
        <dbReference type="ChEBI" id="CHEBI:29105"/>
    </cofactor>
    <text evidence="1">Binds 1 zinc ion per subunit.</text>
</comment>
<comment type="subunit">
    <text evidence="1">Homodimer.</text>
</comment>
<comment type="similarity">
    <text evidence="1">Belongs to the cytidine and deoxycytidylate deaminase family.</text>
</comment>
<reference key="1">
    <citation type="journal article" date="1990" name="Biochim. Biophys. Acta">
        <title>Characterization of a 17 kDa protein gene upstream from the small cytoplasmic RNA gene of Bacillus subtilis.</title>
        <authorList>
            <person name="Struck J.C.R."/>
            <person name="Kretschmer-Kazemi F.R."/>
            <person name="Schroeder W."/>
            <person name="Hucho F."/>
            <person name="Toschka H.Y."/>
            <person name="Erdmann V.A."/>
        </authorList>
    </citation>
    <scope>NUCLEOTIDE SEQUENCE [GENOMIC DNA]</scope>
    <scope>PROTEIN SEQUENCE OF 1-16</scope>
    <source>
        <strain>168</strain>
    </source>
</reference>
<reference key="2">
    <citation type="journal article" date="1994" name="DNA Res.">
        <title>Systematic sequencing of the 180 kilobase region of the Bacillus subtilis chromosome containing the replication origin.</title>
        <authorList>
            <person name="Ogasawara N."/>
            <person name="Nakai S."/>
            <person name="Yoshikawa H."/>
        </authorList>
    </citation>
    <scope>NUCLEOTIDE SEQUENCE [GENOMIC DNA]</scope>
    <source>
        <strain>168</strain>
    </source>
</reference>
<reference key="3">
    <citation type="journal article" date="1997" name="Nature">
        <title>The complete genome sequence of the Gram-positive bacterium Bacillus subtilis.</title>
        <authorList>
            <person name="Kunst F."/>
            <person name="Ogasawara N."/>
            <person name="Moszer I."/>
            <person name="Albertini A.M."/>
            <person name="Alloni G."/>
            <person name="Azevedo V."/>
            <person name="Bertero M.G."/>
            <person name="Bessieres P."/>
            <person name="Bolotin A."/>
            <person name="Borchert S."/>
            <person name="Borriss R."/>
            <person name="Boursier L."/>
            <person name="Brans A."/>
            <person name="Braun M."/>
            <person name="Brignell S.C."/>
            <person name="Bron S."/>
            <person name="Brouillet S."/>
            <person name="Bruschi C.V."/>
            <person name="Caldwell B."/>
            <person name="Capuano V."/>
            <person name="Carter N.M."/>
            <person name="Choi S.-K."/>
            <person name="Codani J.-J."/>
            <person name="Connerton I.F."/>
            <person name="Cummings N.J."/>
            <person name="Daniel R.A."/>
            <person name="Denizot F."/>
            <person name="Devine K.M."/>
            <person name="Duesterhoeft A."/>
            <person name="Ehrlich S.D."/>
            <person name="Emmerson P.T."/>
            <person name="Entian K.-D."/>
            <person name="Errington J."/>
            <person name="Fabret C."/>
            <person name="Ferrari E."/>
            <person name="Foulger D."/>
            <person name="Fritz C."/>
            <person name="Fujita M."/>
            <person name="Fujita Y."/>
            <person name="Fuma S."/>
            <person name="Galizzi A."/>
            <person name="Galleron N."/>
            <person name="Ghim S.-Y."/>
            <person name="Glaser P."/>
            <person name="Goffeau A."/>
            <person name="Golightly E.J."/>
            <person name="Grandi G."/>
            <person name="Guiseppi G."/>
            <person name="Guy B.J."/>
            <person name="Haga K."/>
            <person name="Haiech J."/>
            <person name="Harwood C.R."/>
            <person name="Henaut A."/>
            <person name="Hilbert H."/>
            <person name="Holsappel S."/>
            <person name="Hosono S."/>
            <person name="Hullo M.-F."/>
            <person name="Itaya M."/>
            <person name="Jones L.-M."/>
            <person name="Joris B."/>
            <person name="Karamata D."/>
            <person name="Kasahara Y."/>
            <person name="Klaerr-Blanchard M."/>
            <person name="Klein C."/>
            <person name="Kobayashi Y."/>
            <person name="Koetter P."/>
            <person name="Koningstein G."/>
            <person name="Krogh S."/>
            <person name="Kumano M."/>
            <person name="Kurita K."/>
            <person name="Lapidus A."/>
            <person name="Lardinois S."/>
            <person name="Lauber J."/>
            <person name="Lazarevic V."/>
            <person name="Lee S.-M."/>
            <person name="Levine A."/>
            <person name="Liu H."/>
            <person name="Masuda S."/>
            <person name="Mauel C."/>
            <person name="Medigue C."/>
            <person name="Medina N."/>
            <person name="Mellado R.P."/>
            <person name="Mizuno M."/>
            <person name="Moestl D."/>
            <person name="Nakai S."/>
            <person name="Noback M."/>
            <person name="Noone D."/>
            <person name="O'Reilly M."/>
            <person name="Ogawa K."/>
            <person name="Ogiwara A."/>
            <person name="Oudega B."/>
            <person name="Park S.-H."/>
            <person name="Parro V."/>
            <person name="Pohl T.M."/>
            <person name="Portetelle D."/>
            <person name="Porwollik S."/>
            <person name="Prescott A.M."/>
            <person name="Presecan E."/>
            <person name="Pujic P."/>
            <person name="Purnelle B."/>
            <person name="Rapoport G."/>
            <person name="Rey M."/>
            <person name="Reynolds S."/>
            <person name="Rieger M."/>
            <person name="Rivolta C."/>
            <person name="Rocha E."/>
            <person name="Roche B."/>
            <person name="Rose M."/>
            <person name="Sadaie Y."/>
            <person name="Sato T."/>
            <person name="Scanlan E."/>
            <person name="Schleich S."/>
            <person name="Schroeter R."/>
            <person name="Scoffone F."/>
            <person name="Sekiguchi J."/>
            <person name="Sekowska A."/>
            <person name="Seror S.J."/>
            <person name="Serror P."/>
            <person name="Shin B.-S."/>
            <person name="Soldo B."/>
            <person name="Sorokin A."/>
            <person name="Tacconi E."/>
            <person name="Takagi T."/>
            <person name="Takahashi H."/>
            <person name="Takemaru K."/>
            <person name="Takeuchi M."/>
            <person name="Tamakoshi A."/>
            <person name="Tanaka T."/>
            <person name="Terpstra P."/>
            <person name="Tognoni A."/>
            <person name="Tosato V."/>
            <person name="Uchiyama S."/>
            <person name="Vandenbol M."/>
            <person name="Vannier F."/>
            <person name="Vassarotti A."/>
            <person name="Viari A."/>
            <person name="Wambutt R."/>
            <person name="Wedler E."/>
            <person name="Wedler H."/>
            <person name="Weitzenegger T."/>
            <person name="Winters P."/>
            <person name="Wipat A."/>
            <person name="Yamamoto H."/>
            <person name="Yamane K."/>
            <person name="Yasumoto K."/>
            <person name="Yata K."/>
            <person name="Yoshida K."/>
            <person name="Yoshikawa H.-F."/>
            <person name="Zumstein E."/>
            <person name="Yoshikawa H."/>
            <person name="Danchin A."/>
        </authorList>
    </citation>
    <scope>NUCLEOTIDE SEQUENCE [LARGE SCALE GENOMIC DNA]</scope>
    <source>
        <strain>168</strain>
    </source>
</reference>
<evidence type="ECO:0000255" key="1">
    <source>
        <dbReference type="HAMAP-Rule" id="MF_00972"/>
    </source>
</evidence>
<evidence type="ECO:0000255" key="2">
    <source>
        <dbReference type="PROSITE-ProRule" id="PRU01083"/>
    </source>
</evidence>
<evidence type="ECO:0007829" key="3">
    <source>
        <dbReference type="PDB" id="7CPH"/>
    </source>
</evidence>
<protein>
    <recommendedName>
        <fullName evidence="1">tRNA-specific adenosine deaminase</fullName>
        <ecNumber evidence="1">3.5.4.33</ecNumber>
    </recommendedName>
</protein>
<name>TADA_BACSU</name>
<gene>
    <name evidence="1" type="primary">tadA</name>
    <name type="synonym">yaaJ</name>
    <name type="ordered locus">BSU00180</name>
</gene>